<name>YHUT_PSEPU</name>
<organism>
    <name type="scientific">Pseudomonas putida</name>
    <name type="common">Arthrobacter siderocapsulatus</name>
    <dbReference type="NCBI Taxonomy" id="303"/>
    <lineage>
        <taxon>Bacteria</taxon>
        <taxon>Pseudomonadati</taxon>
        <taxon>Pseudomonadota</taxon>
        <taxon>Gammaproteobacteria</taxon>
        <taxon>Pseudomonadales</taxon>
        <taxon>Pseudomonadaceae</taxon>
        <taxon>Pseudomonas</taxon>
    </lineage>
</organism>
<proteinExistence type="predicted"/>
<feature type="chain" id="PRO_0000066258" description="Uncharacterized 21.2 kDa protein in hutC 3'region">
    <location>
        <begin position="1"/>
        <end position="190"/>
    </location>
</feature>
<comment type="similarity">
    <text evidence="1">To E.coli YdjR.</text>
</comment>
<sequence>MSQLQLLRAQDYPRMPWKNGGGFTEEITRDSGEGLDGFGWRLSIADIEESGGFSTFAGYQRIITVLQGDGMRLLVDGQPSRPLLPFDAFAFSGESQVSCKLLGGAIRDFNLIYAPQRYRARLQWFDGTSRLYSSASTVLLFAASSHVEVSMAGREVQRLGLYDCLRLEGNDELLGLEVQGRFCLIELISR</sequence>
<protein>
    <recommendedName>
        <fullName>Uncharacterized 21.2 kDa protein in hutC 3'region</fullName>
    </recommendedName>
</protein>
<reference key="1">
    <citation type="journal article" date="1990" name="J. Bacteriol.">
        <title>Nucleotide sequence of the gene encoding the repressor for the histidine utilization genes of Pseudomonas putida.</title>
        <authorList>
            <person name="Allison S.L."/>
            <person name="Phillips A.T."/>
        </authorList>
    </citation>
    <scope>NUCLEOTIDE SEQUENCE [GENOMIC DNA]</scope>
</reference>
<dbReference type="EMBL" id="M33922">
    <property type="protein sequence ID" value="AAA25842.1"/>
    <property type="molecule type" value="Genomic_DNA"/>
</dbReference>
<dbReference type="PIR" id="B36729">
    <property type="entry name" value="B36729"/>
</dbReference>
<dbReference type="RefSeq" id="WP_016502007.1">
    <property type="nucleotide sequence ID" value="NZ_UGUX01000003.1"/>
</dbReference>
<dbReference type="SMR" id="P24696"/>
<dbReference type="GeneID" id="45526578"/>
<dbReference type="CDD" id="cd20490">
    <property type="entry name" value="cupin_HutD_C"/>
    <property type="match status" value="1"/>
</dbReference>
<dbReference type="CDD" id="cd20293">
    <property type="entry name" value="cupin_HutD_N"/>
    <property type="match status" value="1"/>
</dbReference>
<dbReference type="Gene3D" id="2.60.120.10">
    <property type="entry name" value="Jelly Rolls"/>
    <property type="match status" value="1"/>
</dbReference>
<dbReference type="InterPro" id="IPR014710">
    <property type="entry name" value="RmlC-like_jellyroll"/>
</dbReference>
<dbReference type="InterPro" id="IPR011051">
    <property type="entry name" value="RmlC_Cupin_sf"/>
</dbReference>
<dbReference type="InterPro" id="IPR010282">
    <property type="entry name" value="Uncharacterised_HutD/Ves"/>
</dbReference>
<dbReference type="PANTHER" id="PTHR37943">
    <property type="entry name" value="PROTEIN VES"/>
    <property type="match status" value="1"/>
</dbReference>
<dbReference type="PANTHER" id="PTHR37943:SF1">
    <property type="entry name" value="PROTEIN VES"/>
    <property type="match status" value="1"/>
</dbReference>
<dbReference type="Pfam" id="PF05962">
    <property type="entry name" value="HutD"/>
    <property type="match status" value="1"/>
</dbReference>
<dbReference type="SUPFAM" id="SSF51182">
    <property type="entry name" value="RmlC-like cupins"/>
    <property type="match status" value="1"/>
</dbReference>
<accession>P24696</accession>
<evidence type="ECO:0000305" key="1"/>